<sequence>MKKWMAAVFVMMLMLCFGGIENVKAAEPKVYQFDFGSGSMEPGYIGVRASDRYDRSKGYGFQTPENMRDVAASGAGVKSDAVQFLAYGTKSNNTFNVDLPNGLYEVKVTLGNTARASVAAEGVFQVINMTGDGAEDTFQIPVTDGQLNLLVTEGKAGTAFTLSALKIKKLSDQPVTNRTIYVGGDSTVCNYYPLNSSKQAGWGQMLPHYIDKHTFQVRNMASGGQIARGFRNDGQLEAILKYIKPGDYFMLQLGINDTNPKHKESEAEFKEVMRDMIRQVKAKGADVILSTPQGRATDFTSEGIHSSVNRWYRASILALAEEEKTYLIDLNVLSSAYFTSIGPERTLGLYMDGDTLHPNRAGADALARLAVQELKRQGIAGF</sequence>
<protein>
    <recommendedName>
        <fullName>Uncharacterized esterase YxiM</fullName>
        <ecNumber>3.1.-.-</ecNumber>
    </recommendedName>
</protein>
<reference key="1">
    <citation type="journal article" date="1996" name="Microbiology">
        <title>Sequencing of a 65 kb region of the Bacillus subtilis genome containing the lic and cel loci, and creation of a 177 kb contig covering the gnt-sacXY region.</title>
        <authorList>
            <person name="Yoshida K."/>
            <person name="Shindo K."/>
            <person name="Sano H."/>
            <person name="Seki S."/>
            <person name="Fujimura M."/>
            <person name="Yanai N."/>
            <person name="Miwa Y."/>
            <person name="Fujita Y."/>
        </authorList>
    </citation>
    <scope>NUCLEOTIDE SEQUENCE [GENOMIC DNA]</scope>
    <source>
        <strain>168 / BGSC1A1</strain>
    </source>
</reference>
<reference key="2">
    <citation type="journal article" date="1997" name="Nature">
        <title>The complete genome sequence of the Gram-positive bacterium Bacillus subtilis.</title>
        <authorList>
            <person name="Kunst F."/>
            <person name="Ogasawara N."/>
            <person name="Moszer I."/>
            <person name="Albertini A.M."/>
            <person name="Alloni G."/>
            <person name="Azevedo V."/>
            <person name="Bertero M.G."/>
            <person name="Bessieres P."/>
            <person name="Bolotin A."/>
            <person name="Borchert S."/>
            <person name="Borriss R."/>
            <person name="Boursier L."/>
            <person name="Brans A."/>
            <person name="Braun M."/>
            <person name="Brignell S.C."/>
            <person name="Bron S."/>
            <person name="Brouillet S."/>
            <person name="Bruschi C.V."/>
            <person name="Caldwell B."/>
            <person name="Capuano V."/>
            <person name="Carter N.M."/>
            <person name="Choi S.-K."/>
            <person name="Codani J.-J."/>
            <person name="Connerton I.F."/>
            <person name="Cummings N.J."/>
            <person name="Daniel R.A."/>
            <person name="Denizot F."/>
            <person name="Devine K.M."/>
            <person name="Duesterhoeft A."/>
            <person name="Ehrlich S.D."/>
            <person name="Emmerson P.T."/>
            <person name="Entian K.-D."/>
            <person name="Errington J."/>
            <person name="Fabret C."/>
            <person name="Ferrari E."/>
            <person name="Foulger D."/>
            <person name="Fritz C."/>
            <person name="Fujita M."/>
            <person name="Fujita Y."/>
            <person name="Fuma S."/>
            <person name="Galizzi A."/>
            <person name="Galleron N."/>
            <person name="Ghim S.-Y."/>
            <person name="Glaser P."/>
            <person name="Goffeau A."/>
            <person name="Golightly E.J."/>
            <person name="Grandi G."/>
            <person name="Guiseppi G."/>
            <person name="Guy B.J."/>
            <person name="Haga K."/>
            <person name="Haiech J."/>
            <person name="Harwood C.R."/>
            <person name="Henaut A."/>
            <person name="Hilbert H."/>
            <person name="Holsappel S."/>
            <person name="Hosono S."/>
            <person name="Hullo M.-F."/>
            <person name="Itaya M."/>
            <person name="Jones L.-M."/>
            <person name="Joris B."/>
            <person name="Karamata D."/>
            <person name="Kasahara Y."/>
            <person name="Klaerr-Blanchard M."/>
            <person name="Klein C."/>
            <person name="Kobayashi Y."/>
            <person name="Koetter P."/>
            <person name="Koningstein G."/>
            <person name="Krogh S."/>
            <person name="Kumano M."/>
            <person name="Kurita K."/>
            <person name="Lapidus A."/>
            <person name="Lardinois S."/>
            <person name="Lauber J."/>
            <person name="Lazarevic V."/>
            <person name="Lee S.-M."/>
            <person name="Levine A."/>
            <person name="Liu H."/>
            <person name="Masuda S."/>
            <person name="Mauel C."/>
            <person name="Medigue C."/>
            <person name="Medina N."/>
            <person name="Mellado R.P."/>
            <person name="Mizuno M."/>
            <person name="Moestl D."/>
            <person name="Nakai S."/>
            <person name="Noback M."/>
            <person name="Noone D."/>
            <person name="O'Reilly M."/>
            <person name="Ogawa K."/>
            <person name="Ogiwara A."/>
            <person name="Oudega B."/>
            <person name="Park S.-H."/>
            <person name="Parro V."/>
            <person name="Pohl T.M."/>
            <person name="Portetelle D."/>
            <person name="Porwollik S."/>
            <person name="Prescott A.M."/>
            <person name="Presecan E."/>
            <person name="Pujic P."/>
            <person name="Purnelle B."/>
            <person name="Rapoport G."/>
            <person name="Rey M."/>
            <person name="Reynolds S."/>
            <person name="Rieger M."/>
            <person name="Rivolta C."/>
            <person name="Rocha E."/>
            <person name="Roche B."/>
            <person name="Rose M."/>
            <person name="Sadaie Y."/>
            <person name="Sato T."/>
            <person name="Scanlan E."/>
            <person name="Schleich S."/>
            <person name="Schroeter R."/>
            <person name="Scoffone F."/>
            <person name="Sekiguchi J."/>
            <person name="Sekowska A."/>
            <person name="Seror S.J."/>
            <person name="Serror P."/>
            <person name="Shin B.-S."/>
            <person name="Soldo B."/>
            <person name="Sorokin A."/>
            <person name="Tacconi E."/>
            <person name="Takagi T."/>
            <person name="Takahashi H."/>
            <person name="Takemaru K."/>
            <person name="Takeuchi M."/>
            <person name="Tamakoshi A."/>
            <person name="Tanaka T."/>
            <person name="Terpstra P."/>
            <person name="Tognoni A."/>
            <person name="Tosato V."/>
            <person name="Uchiyama S."/>
            <person name="Vandenbol M."/>
            <person name="Vannier F."/>
            <person name="Vassarotti A."/>
            <person name="Viari A."/>
            <person name="Wambutt R."/>
            <person name="Wedler E."/>
            <person name="Wedler H."/>
            <person name="Weitzenegger T."/>
            <person name="Winters P."/>
            <person name="Wipat A."/>
            <person name="Yamamoto H."/>
            <person name="Yamane K."/>
            <person name="Yasumoto K."/>
            <person name="Yata K."/>
            <person name="Yoshida K."/>
            <person name="Yoshikawa H.-F."/>
            <person name="Zumstein E."/>
            <person name="Yoshikawa H."/>
            <person name="Danchin A."/>
        </authorList>
    </citation>
    <scope>NUCLEOTIDE SEQUENCE [LARGE SCALE GENOMIC DNA]</scope>
    <source>
        <strain>168</strain>
    </source>
</reference>
<reference key="3">
    <citation type="journal article" date="2009" name="Microbiology">
        <title>From a consortium sequence to a unified sequence: the Bacillus subtilis 168 reference genome a decade later.</title>
        <authorList>
            <person name="Barbe V."/>
            <person name="Cruveiller S."/>
            <person name="Kunst F."/>
            <person name="Lenoble P."/>
            <person name="Meurice G."/>
            <person name="Sekowska A."/>
            <person name="Vallenet D."/>
            <person name="Wang T."/>
            <person name="Moszer I."/>
            <person name="Medigue C."/>
            <person name="Danchin A."/>
        </authorList>
    </citation>
    <scope>SEQUENCE REVISION TO 83</scope>
</reference>
<reference key="4">
    <citation type="submission" date="2006-12" db="PDB data bank">
        <title>X-ray structure of the hypothetical protein YXIM_BACSU from Bacillus subtilis.</title>
        <authorList>
            <consortium name="Northeast structural genomics consortium (NESG)"/>
        </authorList>
    </citation>
    <scope>X-RAY CRYSTALLOGRAPHY (2.1 ANGSTROMS) OF 17-382</scope>
</reference>
<gene>
    <name type="primary">yxiM</name>
    <name type="ordered locus">BSU39120</name>
    <name type="ORF">SS8D</name>
</gene>
<proteinExistence type="evidence at protein level"/>
<accession>P42304</accession>
<keyword id="KW-0002">3D-structure</keyword>
<keyword id="KW-0378">Hydrolase</keyword>
<keyword id="KW-1185">Reference proteome</keyword>
<keyword id="KW-0732">Signal</keyword>
<name>YXIM_BACSU</name>
<feature type="signal peptide" evidence="2">
    <location>
        <begin position="1"/>
        <end position="25"/>
    </location>
</feature>
<feature type="chain" id="PRO_0000013744" description="Uncharacterized esterase YxiM">
    <location>
        <begin position="26"/>
        <end position="382"/>
    </location>
</feature>
<feature type="active site" description="Nucleophile" evidence="1">
    <location>
        <position position="186"/>
    </location>
</feature>
<feature type="active site" evidence="1">
    <location>
        <position position="354"/>
    </location>
</feature>
<feature type="active site" evidence="1">
    <location>
        <position position="357"/>
    </location>
</feature>
<feature type="sequence conflict" description="In Ref. 1; BAA11692." evidence="3" ref="1">
    <original>Q</original>
    <variation>E</variation>
    <location>
        <position position="83"/>
    </location>
</feature>
<feature type="strand" evidence="4">
    <location>
        <begin position="30"/>
        <end position="38"/>
    </location>
</feature>
<feature type="strand" evidence="4">
    <location>
        <begin position="44"/>
        <end position="47"/>
    </location>
</feature>
<feature type="turn" evidence="4">
    <location>
        <begin position="55"/>
        <end position="57"/>
    </location>
</feature>
<feature type="strand" evidence="4">
    <location>
        <begin position="58"/>
        <end position="62"/>
    </location>
</feature>
<feature type="helix" evidence="4">
    <location>
        <begin position="64"/>
        <end position="66"/>
    </location>
</feature>
<feature type="strand" evidence="4">
    <location>
        <begin position="67"/>
        <end position="71"/>
    </location>
</feature>
<feature type="strand" evidence="4">
    <location>
        <begin position="73"/>
        <end position="75"/>
    </location>
</feature>
<feature type="helix" evidence="4">
    <location>
        <begin position="76"/>
        <end position="79"/>
    </location>
</feature>
<feature type="strand" evidence="4">
    <location>
        <begin position="80"/>
        <end position="86"/>
    </location>
</feature>
<feature type="strand" evidence="4">
    <location>
        <begin position="95"/>
        <end position="98"/>
    </location>
</feature>
<feature type="strand" evidence="4">
    <location>
        <begin position="101"/>
        <end position="112"/>
    </location>
</feature>
<feature type="strand" evidence="4">
    <location>
        <begin position="114"/>
        <end position="120"/>
    </location>
</feature>
<feature type="strand" evidence="4">
    <location>
        <begin position="123"/>
        <end position="131"/>
    </location>
</feature>
<feature type="strand" evidence="4">
    <location>
        <begin position="135"/>
        <end position="142"/>
    </location>
</feature>
<feature type="strand" evidence="4">
    <location>
        <begin position="144"/>
        <end position="155"/>
    </location>
</feature>
<feature type="strand" evidence="4">
    <location>
        <begin position="161"/>
        <end position="173"/>
    </location>
</feature>
<feature type="strand" evidence="4">
    <location>
        <begin position="179"/>
        <end position="184"/>
    </location>
</feature>
<feature type="turn" evidence="4">
    <location>
        <begin position="186"/>
        <end position="188"/>
    </location>
</feature>
<feature type="turn" evidence="4">
    <location>
        <begin position="194"/>
        <end position="196"/>
    </location>
</feature>
<feature type="helix" evidence="4">
    <location>
        <begin position="202"/>
        <end position="205"/>
    </location>
</feature>
<feature type="helix" evidence="4">
    <location>
        <begin position="206"/>
        <end position="208"/>
    </location>
</feature>
<feature type="turn" evidence="4">
    <location>
        <begin position="212"/>
        <end position="214"/>
    </location>
</feature>
<feature type="strand" evidence="4">
    <location>
        <begin position="216"/>
        <end position="219"/>
    </location>
</feature>
<feature type="helix" evidence="4">
    <location>
        <begin position="227"/>
        <end position="232"/>
    </location>
</feature>
<feature type="helix" evidence="4">
    <location>
        <begin position="235"/>
        <end position="240"/>
    </location>
</feature>
<feature type="strand" evidence="4">
    <location>
        <begin position="248"/>
        <end position="252"/>
    </location>
</feature>
<feature type="helix" evidence="4">
    <location>
        <begin position="256"/>
        <end position="258"/>
    </location>
</feature>
<feature type="helix" evidence="4">
    <location>
        <begin position="260"/>
        <end position="262"/>
    </location>
</feature>
<feature type="helix" evidence="4">
    <location>
        <begin position="266"/>
        <end position="281"/>
    </location>
</feature>
<feature type="turn" evidence="4">
    <location>
        <begin position="282"/>
        <end position="284"/>
    </location>
</feature>
<feature type="strand" evidence="4">
    <location>
        <begin position="286"/>
        <end position="290"/>
    </location>
</feature>
<feature type="helix" evidence="4">
    <location>
        <begin position="313"/>
        <end position="322"/>
    </location>
</feature>
<feature type="strand" evidence="4">
    <location>
        <begin position="326"/>
        <end position="328"/>
    </location>
</feature>
<feature type="helix" evidence="4">
    <location>
        <begin position="330"/>
        <end position="341"/>
    </location>
</feature>
<feature type="helix" evidence="4">
    <location>
        <begin position="343"/>
        <end position="347"/>
    </location>
</feature>
<feature type="strand" evidence="4">
    <location>
        <begin position="355"/>
        <end position="359"/>
    </location>
</feature>
<feature type="helix" evidence="4">
    <location>
        <begin position="360"/>
        <end position="376"/>
    </location>
</feature>
<evidence type="ECO:0000250" key="1"/>
<evidence type="ECO:0000255" key="2"/>
<evidence type="ECO:0000305" key="3"/>
<evidence type="ECO:0007829" key="4">
    <source>
        <dbReference type="PDB" id="2O14"/>
    </source>
</evidence>
<comment type="similarity">
    <text evidence="3">Belongs to the 'GDSL' lipolytic enzyme family.</text>
</comment>
<dbReference type="EC" id="3.1.-.-"/>
<dbReference type="EMBL" id="D83026">
    <property type="protein sequence ID" value="BAA11692.1"/>
    <property type="molecule type" value="Genomic_DNA"/>
</dbReference>
<dbReference type="EMBL" id="AL009126">
    <property type="protein sequence ID" value="CAB15948.2"/>
    <property type="molecule type" value="Genomic_DNA"/>
</dbReference>
<dbReference type="PIR" id="A70078">
    <property type="entry name" value="A70078"/>
</dbReference>
<dbReference type="RefSeq" id="NP_391791.2">
    <property type="nucleotide sequence ID" value="NC_000964.3"/>
</dbReference>
<dbReference type="RefSeq" id="WP_003242617.1">
    <property type="nucleotide sequence ID" value="NZ_OZ025638.1"/>
</dbReference>
<dbReference type="PDB" id="2O14">
    <property type="method" value="X-ray"/>
    <property type="resolution" value="2.10 A"/>
    <property type="chains" value="A=17-382"/>
</dbReference>
<dbReference type="PDBsum" id="2O14"/>
<dbReference type="SMR" id="P42304"/>
<dbReference type="FunCoup" id="P42304">
    <property type="interactions" value="6"/>
</dbReference>
<dbReference type="STRING" id="224308.BSU39120"/>
<dbReference type="PaxDb" id="224308-BSU39120"/>
<dbReference type="EnsemblBacteria" id="CAB15948">
    <property type="protein sequence ID" value="CAB15948"/>
    <property type="gene ID" value="BSU_39120"/>
</dbReference>
<dbReference type="GeneID" id="937485"/>
<dbReference type="KEGG" id="bsu:BSU39120"/>
<dbReference type="PATRIC" id="fig|224308.179.peg.4236"/>
<dbReference type="eggNOG" id="COG2755">
    <property type="taxonomic scope" value="Bacteria"/>
</dbReference>
<dbReference type="eggNOG" id="COG3401">
    <property type="taxonomic scope" value="Bacteria"/>
</dbReference>
<dbReference type="InParanoid" id="P42304"/>
<dbReference type="OrthoDB" id="9807041at2"/>
<dbReference type="PhylomeDB" id="P42304"/>
<dbReference type="BioCyc" id="BSUB:BSU39120-MONOMER"/>
<dbReference type="EvolutionaryTrace" id="P42304"/>
<dbReference type="Proteomes" id="UP000001570">
    <property type="component" value="Chromosome"/>
</dbReference>
<dbReference type="GO" id="GO:0016787">
    <property type="term" value="F:hydrolase activity"/>
    <property type="evidence" value="ECO:0007669"/>
    <property type="project" value="UniProtKB-KW"/>
</dbReference>
<dbReference type="CDD" id="cd01821">
    <property type="entry name" value="Rhamnogalacturan_acetylesterase_like"/>
    <property type="match status" value="1"/>
</dbReference>
<dbReference type="FunFam" id="2.60.120.430:FF:000018">
    <property type="entry name" value="Putative esterase (Lipoprotein)"/>
    <property type="match status" value="1"/>
</dbReference>
<dbReference type="Gene3D" id="2.60.120.430">
    <property type="entry name" value="Galactose-binding lectin"/>
    <property type="match status" value="1"/>
</dbReference>
<dbReference type="Gene3D" id="3.40.50.1110">
    <property type="entry name" value="SGNH hydrolase"/>
    <property type="match status" value="1"/>
</dbReference>
<dbReference type="InterPro" id="IPR049033">
    <property type="entry name" value="AGA-YXIM_GBD"/>
</dbReference>
<dbReference type="InterPro" id="IPR008979">
    <property type="entry name" value="Galactose-bd-like_sf"/>
</dbReference>
<dbReference type="InterPro" id="IPR037459">
    <property type="entry name" value="RhgT-like"/>
</dbReference>
<dbReference type="InterPro" id="IPR013830">
    <property type="entry name" value="SGNH_hydro"/>
</dbReference>
<dbReference type="InterPro" id="IPR036514">
    <property type="entry name" value="SGNH_hydro_sf"/>
</dbReference>
<dbReference type="PANTHER" id="PTHR43695">
    <property type="entry name" value="PUTATIVE (AFU_ORTHOLOGUE AFUA_2G17250)-RELATED"/>
    <property type="match status" value="1"/>
</dbReference>
<dbReference type="PANTHER" id="PTHR43695:SF1">
    <property type="entry name" value="RHAMNOGALACTURONAN ACETYLESTERASE"/>
    <property type="match status" value="1"/>
</dbReference>
<dbReference type="Pfam" id="PF21254">
    <property type="entry name" value="AGA-YXIM_GBD"/>
    <property type="match status" value="1"/>
</dbReference>
<dbReference type="Pfam" id="PF13472">
    <property type="entry name" value="Lipase_GDSL_2"/>
    <property type="match status" value="1"/>
</dbReference>
<dbReference type="SUPFAM" id="SSF49785">
    <property type="entry name" value="Galactose-binding domain-like"/>
    <property type="match status" value="1"/>
</dbReference>
<dbReference type="SUPFAM" id="SSF52266">
    <property type="entry name" value="SGNH hydrolase"/>
    <property type="match status" value="1"/>
</dbReference>
<organism>
    <name type="scientific">Bacillus subtilis (strain 168)</name>
    <dbReference type="NCBI Taxonomy" id="224308"/>
    <lineage>
        <taxon>Bacteria</taxon>
        <taxon>Bacillati</taxon>
        <taxon>Bacillota</taxon>
        <taxon>Bacilli</taxon>
        <taxon>Bacillales</taxon>
        <taxon>Bacillaceae</taxon>
        <taxon>Bacillus</taxon>
    </lineage>
</organism>